<sequence length="323" mass="35880">MSQLPPAIFLMGPTAAGKTDLAIELTKVLPCELISVDSALVYRGMDIGTAKPSKELLAEFPHRLIDILDPAEAYSAADFRRDALEAMAEITARGKIPLLVGGTMLYYKALIEGLADMPAADPEVRAQIEEEAARLGWQALHDQLAAIDPESAARIHPNDPQRLSRALEVYRVSGQSMTELRLKQSVQSTEAAASGLQQLPYTVANLAIAPTNRQVLHERIKQRFTNMLEQGFIDEVVALRNRSDLHAGLPSIRAVGYRQVWDFLDGKLTSAEMQERGIIATRQLAKRQFTWLRSWKDLHWLDSLDCDNLPRALKYLGTISILS</sequence>
<protein>
    <recommendedName>
        <fullName evidence="1">tRNA dimethylallyltransferase</fullName>
        <ecNumber evidence="1">2.5.1.75</ecNumber>
    </recommendedName>
    <alternativeName>
        <fullName evidence="1">Dimethylallyl diphosphate:tRNA dimethylallyltransferase</fullName>
        <shortName evidence="1">DMAPP:tRNA dimethylallyltransferase</shortName>
        <shortName evidence="1">DMATase</shortName>
    </alternativeName>
    <alternativeName>
        <fullName evidence="1">Isopentenyl-diphosphate:tRNA isopentenyltransferase</fullName>
        <shortName evidence="1">IPP transferase</shortName>
        <shortName evidence="1">IPPT</shortName>
        <shortName evidence="1">IPTase</shortName>
    </alternativeName>
</protein>
<proteinExistence type="inferred from homology"/>
<dbReference type="EC" id="2.5.1.75" evidence="1"/>
<dbReference type="EMBL" id="CP000094">
    <property type="protein sequence ID" value="ABA72266.1"/>
    <property type="molecule type" value="Genomic_DNA"/>
</dbReference>
<dbReference type="RefSeq" id="WP_011332183.1">
    <property type="nucleotide sequence ID" value="NC_007492.2"/>
</dbReference>
<dbReference type="SMR" id="Q3KIZ0"/>
<dbReference type="KEGG" id="pfo:Pfl01_0522"/>
<dbReference type="eggNOG" id="COG0324">
    <property type="taxonomic scope" value="Bacteria"/>
</dbReference>
<dbReference type="HOGENOM" id="CLU_032616_0_0_6"/>
<dbReference type="Proteomes" id="UP000002704">
    <property type="component" value="Chromosome"/>
</dbReference>
<dbReference type="GO" id="GO:0005524">
    <property type="term" value="F:ATP binding"/>
    <property type="evidence" value="ECO:0007669"/>
    <property type="project" value="UniProtKB-UniRule"/>
</dbReference>
<dbReference type="GO" id="GO:0052381">
    <property type="term" value="F:tRNA dimethylallyltransferase activity"/>
    <property type="evidence" value="ECO:0007669"/>
    <property type="project" value="UniProtKB-UniRule"/>
</dbReference>
<dbReference type="GO" id="GO:0006400">
    <property type="term" value="P:tRNA modification"/>
    <property type="evidence" value="ECO:0007669"/>
    <property type="project" value="TreeGrafter"/>
</dbReference>
<dbReference type="FunFam" id="1.10.20.140:FF:000001">
    <property type="entry name" value="tRNA dimethylallyltransferase"/>
    <property type="match status" value="1"/>
</dbReference>
<dbReference type="Gene3D" id="1.10.20.140">
    <property type="match status" value="1"/>
</dbReference>
<dbReference type="Gene3D" id="1.10.287.890">
    <property type="entry name" value="Crystal structure of tRNA isopentenylpyrophosphate transferase (bh2366) domain"/>
    <property type="match status" value="1"/>
</dbReference>
<dbReference type="Gene3D" id="3.40.50.300">
    <property type="entry name" value="P-loop containing nucleotide triphosphate hydrolases"/>
    <property type="match status" value="1"/>
</dbReference>
<dbReference type="HAMAP" id="MF_00185">
    <property type="entry name" value="IPP_trans"/>
    <property type="match status" value="1"/>
</dbReference>
<dbReference type="InterPro" id="IPR039657">
    <property type="entry name" value="Dimethylallyltransferase"/>
</dbReference>
<dbReference type="InterPro" id="IPR018022">
    <property type="entry name" value="IPT"/>
</dbReference>
<dbReference type="InterPro" id="IPR027417">
    <property type="entry name" value="P-loop_NTPase"/>
</dbReference>
<dbReference type="NCBIfam" id="TIGR00174">
    <property type="entry name" value="miaA"/>
    <property type="match status" value="1"/>
</dbReference>
<dbReference type="PANTHER" id="PTHR11088">
    <property type="entry name" value="TRNA DIMETHYLALLYLTRANSFERASE"/>
    <property type="match status" value="1"/>
</dbReference>
<dbReference type="PANTHER" id="PTHR11088:SF60">
    <property type="entry name" value="TRNA DIMETHYLALLYLTRANSFERASE"/>
    <property type="match status" value="1"/>
</dbReference>
<dbReference type="Pfam" id="PF01715">
    <property type="entry name" value="IPPT"/>
    <property type="match status" value="1"/>
</dbReference>
<dbReference type="SUPFAM" id="SSF52540">
    <property type="entry name" value="P-loop containing nucleoside triphosphate hydrolases"/>
    <property type="match status" value="1"/>
</dbReference>
<name>MIAA_PSEPF</name>
<feature type="chain" id="PRO_1000020646" description="tRNA dimethylallyltransferase">
    <location>
        <begin position="1"/>
        <end position="323"/>
    </location>
</feature>
<feature type="region of interest" description="Interaction with substrate tRNA" evidence="1">
    <location>
        <begin position="37"/>
        <end position="40"/>
    </location>
</feature>
<feature type="region of interest" description="Interaction with substrate tRNA" evidence="1">
    <location>
        <begin position="161"/>
        <end position="165"/>
    </location>
</feature>
<feature type="binding site" evidence="1">
    <location>
        <begin position="12"/>
        <end position="19"/>
    </location>
    <ligand>
        <name>ATP</name>
        <dbReference type="ChEBI" id="CHEBI:30616"/>
    </ligand>
</feature>
<feature type="binding site" evidence="1">
    <location>
        <begin position="14"/>
        <end position="19"/>
    </location>
    <ligand>
        <name>substrate</name>
    </ligand>
</feature>
<feature type="site" description="Interaction with substrate tRNA" evidence="1">
    <location>
        <position position="103"/>
    </location>
</feature>
<feature type="site" description="Interaction with substrate tRNA" evidence="1">
    <location>
        <position position="125"/>
    </location>
</feature>
<keyword id="KW-0067">ATP-binding</keyword>
<keyword id="KW-0460">Magnesium</keyword>
<keyword id="KW-0547">Nucleotide-binding</keyword>
<keyword id="KW-0808">Transferase</keyword>
<keyword id="KW-0819">tRNA processing</keyword>
<organism>
    <name type="scientific">Pseudomonas fluorescens (strain Pf0-1)</name>
    <dbReference type="NCBI Taxonomy" id="205922"/>
    <lineage>
        <taxon>Bacteria</taxon>
        <taxon>Pseudomonadati</taxon>
        <taxon>Pseudomonadota</taxon>
        <taxon>Gammaproteobacteria</taxon>
        <taxon>Pseudomonadales</taxon>
        <taxon>Pseudomonadaceae</taxon>
        <taxon>Pseudomonas</taxon>
    </lineage>
</organism>
<gene>
    <name evidence="1" type="primary">miaA</name>
    <name type="ordered locus">Pfl01_0522</name>
</gene>
<reference key="1">
    <citation type="journal article" date="2009" name="Genome Biol.">
        <title>Genomic and genetic analyses of diversity and plant interactions of Pseudomonas fluorescens.</title>
        <authorList>
            <person name="Silby M.W."/>
            <person name="Cerdeno-Tarraga A.M."/>
            <person name="Vernikos G.S."/>
            <person name="Giddens S.R."/>
            <person name="Jackson R.W."/>
            <person name="Preston G.M."/>
            <person name="Zhang X.-X."/>
            <person name="Moon C.D."/>
            <person name="Gehrig S.M."/>
            <person name="Godfrey S.A.C."/>
            <person name="Knight C.G."/>
            <person name="Malone J.G."/>
            <person name="Robinson Z."/>
            <person name="Spiers A.J."/>
            <person name="Harris S."/>
            <person name="Challis G.L."/>
            <person name="Yaxley A.M."/>
            <person name="Harris D."/>
            <person name="Seeger K."/>
            <person name="Murphy L."/>
            <person name="Rutter S."/>
            <person name="Squares R."/>
            <person name="Quail M.A."/>
            <person name="Saunders E."/>
            <person name="Mavromatis K."/>
            <person name="Brettin T.S."/>
            <person name="Bentley S.D."/>
            <person name="Hothersall J."/>
            <person name="Stephens E."/>
            <person name="Thomas C.M."/>
            <person name="Parkhill J."/>
            <person name="Levy S.B."/>
            <person name="Rainey P.B."/>
            <person name="Thomson N.R."/>
        </authorList>
    </citation>
    <scope>NUCLEOTIDE SEQUENCE [LARGE SCALE GENOMIC DNA]</scope>
    <source>
        <strain>Pf0-1</strain>
    </source>
</reference>
<comment type="function">
    <text evidence="1">Catalyzes the transfer of a dimethylallyl group onto the adenine at position 37 in tRNAs that read codons beginning with uridine, leading to the formation of N6-(dimethylallyl)adenosine (i(6)A).</text>
</comment>
<comment type="catalytic activity">
    <reaction evidence="1">
        <text>adenosine(37) in tRNA + dimethylallyl diphosphate = N(6)-dimethylallyladenosine(37) in tRNA + diphosphate</text>
        <dbReference type="Rhea" id="RHEA:26482"/>
        <dbReference type="Rhea" id="RHEA-COMP:10162"/>
        <dbReference type="Rhea" id="RHEA-COMP:10375"/>
        <dbReference type="ChEBI" id="CHEBI:33019"/>
        <dbReference type="ChEBI" id="CHEBI:57623"/>
        <dbReference type="ChEBI" id="CHEBI:74411"/>
        <dbReference type="ChEBI" id="CHEBI:74415"/>
        <dbReference type="EC" id="2.5.1.75"/>
    </reaction>
</comment>
<comment type="cofactor">
    <cofactor evidence="1">
        <name>Mg(2+)</name>
        <dbReference type="ChEBI" id="CHEBI:18420"/>
    </cofactor>
</comment>
<comment type="subunit">
    <text evidence="1">Monomer.</text>
</comment>
<comment type="similarity">
    <text evidence="1">Belongs to the IPP transferase family.</text>
</comment>
<evidence type="ECO:0000255" key="1">
    <source>
        <dbReference type="HAMAP-Rule" id="MF_00185"/>
    </source>
</evidence>
<accession>Q3KIZ0</accession>